<accession>Q5JJD0</accession>
<protein>
    <recommendedName>
        <fullName evidence="1">DNA-directed RNA polymerase subunit Rpo6</fullName>
        <ecNumber evidence="1">2.7.7.6</ecNumber>
    </recommendedName>
    <alternativeName>
        <fullName evidence="1">DNA-directed RNA polymerase subunit K</fullName>
    </alternativeName>
</protein>
<dbReference type="EC" id="2.7.7.6" evidence="1"/>
<dbReference type="EMBL" id="AP006878">
    <property type="protein sequence ID" value="BAD85687.1"/>
    <property type="molecule type" value="Genomic_DNA"/>
</dbReference>
<dbReference type="RefSeq" id="WP_011250449.1">
    <property type="nucleotide sequence ID" value="NC_006624.1"/>
</dbReference>
<dbReference type="PDB" id="4QIW">
    <property type="method" value="X-ray"/>
    <property type="resolution" value="3.50 A"/>
    <property type="chains" value="K/T=1-57"/>
</dbReference>
<dbReference type="PDB" id="6KF3">
    <property type="method" value="EM"/>
    <property type="resolution" value="3.90 A"/>
    <property type="chains" value="K=1-57"/>
</dbReference>
<dbReference type="PDB" id="6KF4">
    <property type="method" value="EM"/>
    <property type="resolution" value="3.97 A"/>
    <property type="chains" value="K=1-57"/>
</dbReference>
<dbReference type="PDB" id="6KF9">
    <property type="method" value="EM"/>
    <property type="resolution" value="3.79 A"/>
    <property type="chains" value="K=1-57"/>
</dbReference>
<dbReference type="PDB" id="9BCT">
    <property type="method" value="EM"/>
    <property type="resolution" value="2.50 A"/>
    <property type="chains" value="K=1-57"/>
</dbReference>
<dbReference type="PDB" id="9BCU">
    <property type="method" value="EM"/>
    <property type="resolution" value="2.20 A"/>
    <property type="chains" value="K=1-57"/>
</dbReference>
<dbReference type="PDBsum" id="4QIW"/>
<dbReference type="PDBsum" id="6KF3"/>
<dbReference type="PDBsum" id="6KF4"/>
<dbReference type="PDBsum" id="6KF9"/>
<dbReference type="PDBsum" id="9BCT"/>
<dbReference type="PDBsum" id="9BCU"/>
<dbReference type="SMR" id="Q5JJD0"/>
<dbReference type="STRING" id="69014.TK1498"/>
<dbReference type="EnsemblBacteria" id="BAD85687">
    <property type="protein sequence ID" value="BAD85687"/>
    <property type="gene ID" value="TK1498"/>
</dbReference>
<dbReference type="GeneID" id="78448023"/>
<dbReference type="KEGG" id="tko:TK1498"/>
<dbReference type="PATRIC" id="fig|69014.16.peg.1458"/>
<dbReference type="eggNOG" id="arCOG01268">
    <property type="taxonomic scope" value="Archaea"/>
</dbReference>
<dbReference type="HOGENOM" id="CLU_112527_5_0_2"/>
<dbReference type="InParanoid" id="Q5JJD0"/>
<dbReference type="OrthoDB" id="10567at2157"/>
<dbReference type="PhylomeDB" id="Q5JJD0"/>
<dbReference type="Proteomes" id="UP000000536">
    <property type="component" value="Chromosome"/>
</dbReference>
<dbReference type="GO" id="GO:0005694">
    <property type="term" value="C:chromosome"/>
    <property type="evidence" value="ECO:0007669"/>
    <property type="project" value="UniProtKB-SubCell"/>
</dbReference>
<dbReference type="GO" id="GO:0005737">
    <property type="term" value="C:cytoplasm"/>
    <property type="evidence" value="ECO:0007669"/>
    <property type="project" value="UniProtKB-SubCell"/>
</dbReference>
<dbReference type="GO" id="GO:0000428">
    <property type="term" value="C:DNA-directed RNA polymerase complex"/>
    <property type="evidence" value="ECO:0007669"/>
    <property type="project" value="UniProtKB-KW"/>
</dbReference>
<dbReference type="GO" id="GO:0003677">
    <property type="term" value="F:DNA binding"/>
    <property type="evidence" value="ECO:0007669"/>
    <property type="project" value="UniProtKB-UniRule"/>
</dbReference>
<dbReference type="GO" id="GO:0003899">
    <property type="term" value="F:DNA-directed RNA polymerase activity"/>
    <property type="evidence" value="ECO:0007669"/>
    <property type="project" value="UniProtKB-UniRule"/>
</dbReference>
<dbReference type="GO" id="GO:0006351">
    <property type="term" value="P:DNA-templated transcription"/>
    <property type="evidence" value="ECO:0007669"/>
    <property type="project" value="UniProtKB-UniRule"/>
</dbReference>
<dbReference type="Gene3D" id="3.90.940.10">
    <property type="match status" value="1"/>
</dbReference>
<dbReference type="HAMAP" id="MF_00192">
    <property type="entry name" value="RNApol_arch_Rpo6"/>
    <property type="match status" value="1"/>
</dbReference>
<dbReference type="InterPro" id="IPR020708">
    <property type="entry name" value="DNA-dir_RNA_polK_14-18kDa_CS"/>
</dbReference>
<dbReference type="InterPro" id="IPR006110">
    <property type="entry name" value="Pol_omega/Rpo6/RPB6"/>
</dbReference>
<dbReference type="InterPro" id="IPR036161">
    <property type="entry name" value="RPB6/omega-like_sf"/>
</dbReference>
<dbReference type="InterPro" id="IPR006111">
    <property type="entry name" value="Rpo6/Rpb6"/>
</dbReference>
<dbReference type="NCBIfam" id="NF002208">
    <property type="entry name" value="PRK01099.1-3"/>
    <property type="match status" value="1"/>
</dbReference>
<dbReference type="PANTHER" id="PTHR47227">
    <property type="entry name" value="DNA-DIRECTED RNA POLYMERASE SUBUNIT K"/>
    <property type="match status" value="1"/>
</dbReference>
<dbReference type="PANTHER" id="PTHR47227:SF5">
    <property type="entry name" value="DNA-DIRECTED RNA POLYMERASES I, II, AND III SUBUNIT RPABC2"/>
    <property type="match status" value="1"/>
</dbReference>
<dbReference type="Pfam" id="PF01192">
    <property type="entry name" value="RNA_pol_Rpb6"/>
    <property type="match status" value="1"/>
</dbReference>
<dbReference type="PIRSF" id="PIRSF000778">
    <property type="entry name" value="RpoK/RPB6"/>
    <property type="match status" value="1"/>
</dbReference>
<dbReference type="SUPFAM" id="SSF63562">
    <property type="entry name" value="RPB6/omega subunit-like"/>
    <property type="match status" value="1"/>
</dbReference>
<dbReference type="PROSITE" id="PS01111">
    <property type="entry name" value="RNA_POL_K_14KD"/>
    <property type="match status" value="1"/>
</dbReference>
<name>RPO6_THEKO</name>
<feature type="chain" id="PRO_0000133821" description="DNA-directed RNA polymerase subunit Rpo6">
    <location>
        <begin position="1"/>
        <end position="57"/>
    </location>
</feature>
<feature type="helix" evidence="4">
    <location>
        <begin position="6"/>
        <end position="21"/>
    </location>
</feature>
<feature type="helix" evidence="4">
    <location>
        <begin position="36"/>
        <end position="45"/>
    </location>
</feature>
<feature type="strand" evidence="4">
    <location>
        <begin position="52"/>
        <end position="54"/>
    </location>
</feature>
<organism>
    <name type="scientific">Thermococcus kodakarensis (strain ATCC BAA-918 / JCM 12380 / KOD1)</name>
    <name type="common">Pyrococcus kodakaraensis (strain KOD1)</name>
    <dbReference type="NCBI Taxonomy" id="69014"/>
    <lineage>
        <taxon>Archaea</taxon>
        <taxon>Methanobacteriati</taxon>
        <taxon>Methanobacteriota</taxon>
        <taxon>Thermococci</taxon>
        <taxon>Thermococcales</taxon>
        <taxon>Thermococcaceae</taxon>
        <taxon>Thermococcus</taxon>
    </lineage>
</organism>
<keyword id="KW-0002">3D-structure</keyword>
<keyword id="KW-0158">Chromosome</keyword>
<keyword id="KW-0963">Cytoplasm</keyword>
<keyword id="KW-0240">DNA-directed RNA polymerase</keyword>
<keyword id="KW-0548">Nucleotidyltransferase</keyword>
<keyword id="KW-1185">Reference proteome</keyword>
<keyword id="KW-0804">Transcription</keyword>
<keyword id="KW-0808">Transferase</keyword>
<evidence type="ECO:0000255" key="1">
    <source>
        <dbReference type="HAMAP-Rule" id="MF_00192"/>
    </source>
</evidence>
<evidence type="ECO:0000269" key="2">
    <source>
    </source>
</evidence>
<evidence type="ECO:0000305" key="3">
    <source>
    </source>
</evidence>
<evidence type="ECO:0007829" key="4">
    <source>
        <dbReference type="PDB" id="4QIW"/>
    </source>
</evidence>
<proteinExistence type="evidence at protein level"/>
<gene>
    <name evidence="1" type="primary">rpo6</name>
    <name evidence="1" type="synonym">rpoK</name>
    <name type="ordered locus">TK1498</name>
</gene>
<sequence length="57" mass="6280">MFRYTRFEKARIIGARALQIAMGAPVLIDVPEGITPLQAALLEFEKGVIPITVIRPS</sequence>
<reference key="1">
    <citation type="journal article" date="2005" name="Genome Res.">
        <title>Complete genome sequence of the hyperthermophilic archaeon Thermococcus kodakaraensis KOD1 and comparison with Pyrococcus genomes.</title>
        <authorList>
            <person name="Fukui T."/>
            <person name="Atomi H."/>
            <person name="Kanai T."/>
            <person name="Matsumi R."/>
            <person name="Fujiwara S."/>
            <person name="Imanaka T."/>
        </authorList>
    </citation>
    <scope>NUCLEOTIDE SEQUENCE [LARGE SCALE GENOMIC DNA]</scope>
    <source>
        <strain>ATCC BAA-918 / JCM 12380 / KOD1</strain>
    </source>
</reference>
<reference key="2">
    <citation type="journal article" date="2011" name="Mol. Biol. Cell">
        <title>Histone and TK0471/TrmBL2 form a novel heterogeneous genome architecture in the hyperthermophilic archaeon Thermococcus kodakarensis.</title>
        <authorList>
            <person name="Maruyama H."/>
            <person name="Shin M."/>
            <person name="Oda T."/>
            <person name="Matsumi R."/>
            <person name="Ohniwa R.L."/>
            <person name="Itoh T."/>
            <person name="Shirahige K."/>
            <person name="Imanaka T."/>
            <person name="Atomi H."/>
            <person name="Yoshimura S.H."/>
            <person name="Takeyasu K."/>
        </authorList>
    </citation>
    <scope>IDENTIFICATION BY MASS SPECTROMETRY</scope>
    <scope>SUBCELLULAR LOCATION</scope>
    <source>
        <strain>ATCC BAA-918 / JCM 12380 / KOD1</strain>
    </source>
</reference>
<comment type="function">
    <text evidence="1">DNA-dependent RNA polymerase (RNAP) catalyzes the transcription of DNA into RNA using the four ribonucleoside triphosphates as substrates.</text>
</comment>
<comment type="catalytic activity">
    <reaction evidence="1">
        <text>RNA(n) + a ribonucleoside 5'-triphosphate = RNA(n+1) + diphosphate</text>
        <dbReference type="Rhea" id="RHEA:21248"/>
        <dbReference type="Rhea" id="RHEA-COMP:14527"/>
        <dbReference type="Rhea" id="RHEA-COMP:17342"/>
        <dbReference type="ChEBI" id="CHEBI:33019"/>
        <dbReference type="ChEBI" id="CHEBI:61557"/>
        <dbReference type="ChEBI" id="CHEBI:140395"/>
        <dbReference type="EC" id="2.7.7.6"/>
    </reaction>
</comment>
<comment type="subunit">
    <text evidence="1">Part of the RNA polymerase complex.</text>
</comment>
<comment type="subcellular location">
    <subcellularLocation>
        <location evidence="1 3">Cytoplasm</location>
    </subcellularLocation>
    <subcellularLocation>
        <location evidence="2">Chromosome</location>
    </subcellularLocation>
</comment>
<comment type="similarity">
    <text evidence="1">Belongs to the archaeal Rpo6/eukaryotic RPB6 RNA polymerase subunit family.</text>
</comment>